<proteinExistence type="inferred from homology"/>
<dbReference type="EMBL" id="CP000023">
    <property type="protein sequence ID" value="AAV61561.1"/>
    <property type="status" value="ALT_INIT"/>
    <property type="molecule type" value="Genomic_DNA"/>
</dbReference>
<dbReference type="RefSeq" id="WP_041828390.1">
    <property type="nucleotide sequence ID" value="NC_006448.1"/>
</dbReference>
<dbReference type="SMR" id="Q5M285"/>
<dbReference type="STRING" id="264199.stu1967"/>
<dbReference type="GeneID" id="66899693"/>
<dbReference type="KEGG" id="stl:stu1967"/>
<dbReference type="PATRIC" id="fig|264199.4.peg.1950"/>
<dbReference type="eggNOG" id="COG3022">
    <property type="taxonomic scope" value="Bacteria"/>
</dbReference>
<dbReference type="HOGENOM" id="CLU_061989_2_1_9"/>
<dbReference type="Proteomes" id="UP000001170">
    <property type="component" value="Chromosome"/>
</dbReference>
<dbReference type="GO" id="GO:0005829">
    <property type="term" value="C:cytosol"/>
    <property type="evidence" value="ECO:0007669"/>
    <property type="project" value="TreeGrafter"/>
</dbReference>
<dbReference type="GO" id="GO:0033194">
    <property type="term" value="P:response to hydroperoxide"/>
    <property type="evidence" value="ECO:0007669"/>
    <property type="project" value="TreeGrafter"/>
</dbReference>
<dbReference type="HAMAP" id="MF_00652">
    <property type="entry name" value="UPF0246"/>
    <property type="match status" value="1"/>
</dbReference>
<dbReference type="InterPro" id="IPR005583">
    <property type="entry name" value="YaaA"/>
</dbReference>
<dbReference type="NCBIfam" id="NF002543">
    <property type="entry name" value="PRK02101.1-4"/>
    <property type="match status" value="1"/>
</dbReference>
<dbReference type="PANTHER" id="PTHR30283:SF4">
    <property type="entry name" value="PEROXIDE STRESS RESISTANCE PROTEIN YAAA"/>
    <property type="match status" value="1"/>
</dbReference>
<dbReference type="PANTHER" id="PTHR30283">
    <property type="entry name" value="PEROXIDE STRESS RESPONSE PROTEIN YAAA"/>
    <property type="match status" value="1"/>
</dbReference>
<dbReference type="Pfam" id="PF03883">
    <property type="entry name" value="H2O2_YaaD"/>
    <property type="match status" value="1"/>
</dbReference>
<evidence type="ECO:0000255" key="1">
    <source>
        <dbReference type="HAMAP-Rule" id="MF_00652"/>
    </source>
</evidence>
<evidence type="ECO:0000305" key="2"/>
<feature type="chain" id="PRO_0000262072" description="UPF0246 protein stu1967">
    <location>
        <begin position="1"/>
        <end position="246"/>
    </location>
</feature>
<protein>
    <recommendedName>
        <fullName evidence="1">UPF0246 protein stu1967</fullName>
    </recommendedName>
</protein>
<accession>Q5M285</accession>
<reference key="1">
    <citation type="journal article" date="2004" name="Nat. Biotechnol.">
        <title>Complete sequence and comparative genome analysis of the dairy bacterium Streptococcus thermophilus.</title>
        <authorList>
            <person name="Bolotin A."/>
            <person name="Quinquis B."/>
            <person name="Renault P."/>
            <person name="Sorokin A."/>
            <person name="Ehrlich S.D."/>
            <person name="Kulakauskas S."/>
            <person name="Lapidus A."/>
            <person name="Goltsman E."/>
            <person name="Mazur M."/>
            <person name="Pusch G.D."/>
            <person name="Fonstein M."/>
            <person name="Overbeek R."/>
            <person name="Kyprides N."/>
            <person name="Purnelle B."/>
            <person name="Prozzi D."/>
            <person name="Ngui K."/>
            <person name="Masuy D."/>
            <person name="Hancy F."/>
            <person name="Burteau S."/>
            <person name="Boutry M."/>
            <person name="Delcour J."/>
            <person name="Goffeau A."/>
            <person name="Hols P."/>
        </authorList>
    </citation>
    <scope>NUCLEOTIDE SEQUENCE [LARGE SCALE GENOMIC DNA]</scope>
    <source>
        <strain>ATCC BAA-250 / LMG 18311</strain>
    </source>
</reference>
<keyword id="KW-1185">Reference proteome</keyword>
<organism>
    <name type="scientific">Streptococcus thermophilus (strain ATCC BAA-250 / LMG 18311)</name>
    <dbReference type="NCBI Taxonomy" id="264199"/>
    <lineage>
        <taxon>Bacteria</taxon>
        <taxon>Bacillati</taxon>
        <taxon>Bacillota</taxon>
        <taxon>Bacilli</taxon>
        <taxon>Lactobacillales</taxon>
        <taxon>Streptococcaceae</taxon>
        <taxon>Streptococcus</taxon>
    </lineage>
</organism>
<comment type="similarity">
    <text evidence="1">Belongs to the UPF0246 family.</text>
</comment>
<comment type="sequence caution" evidence="2">
    <conflict type="erroneous initiation">
        <sequence resource="EMBL-CDS" id="AAV61561"/>
    </conflict>
</comment>
<sequence length="246" mass="28549">MIRFLIPTAKEMKPSKEVPSQKLSEKSEAILTEMAKLSTDDLSIAYKIKPEQAEKEKQRWDAILAGEAKNYPAVELFNGLMYRHIKRKDLSTCEKDFLSHQVFITSSFYGIIPAFYPIQEHRHDFHTKVKVNGQSLKNYWRAEYDQFLEEGQVPVVSLLSSEFEDVFSPSLRKQLFTVSFMEDRNGILKTHSTISKKARGAFLTAVMEESCQTIDALRDLSFDDFYYRKDLSSDSELFFVRKVKKV</sequence>
<name>Y1967_STRT2</name>
<gene>
    <name type="ordered locus">stu1967</name>
</gene>